<evidence type="ECO:0000250" key="1">
    <source>
        <dbReference type="UniProtKB" id="Q9H0Q0"/>
    </source>
</evidence>
<evidence type="ECO:0000250" key="2">
    <source>
        <dbReference type="UniProtKB" id="Q9NUQ9"/>
    </source>
</evidence>
<evidence type="ECO:0000305" key="3"/>
<gene>
    <name type="primary">cyri</name>
    <name type="synonym">fam49</name>
    <name type="ORF">DDB_G0272190</name>
</gene>
<keyword id="KW-0449">Lipoprotein</keyword>
<keyword id="KW-0472">Membrane</keyword>
<keyword id="KW-1185">Reference proteome</keyword>
<feature type="chain" id="PRO_0000327397" description="CYFIP-related Rac1 interactor homolog">
    <location>
        <begin position="1"/>
        <end position="315"/>
    </location>
</feature>
<reference key="1">
    <citation type="journal article" date="2002" name="Nature">
        <title>Sequence and analysis of chromosome 2 of Dictyostelium discoideum.</title>
        <authorList>
            <person name="Gloeckner G."/>
            <person name="Eichinger L."/>
            <person name="Szafranski K."/>
            <person name="Pachebat J.A."/>
            <person name="Bankier A.T."/>
            <person name="Dear P.H."/>
            <person name="Lehmann R."/>
            <person name="Baumgart C."/>
            <person name="Parra G."/>
            <person name="Abril J.F."/>
            <person name="Guigo R."/>
            <person name="Kumpf K."/>
            <person name="Tunggal B."/>
            <person name="Cox E.C."/>
            <person name="Quail M.A."/>
            <person name="Platzer M."/>
            <person name="Rosenthal A."/>
            <person name="Noegel A.A."/>
        </authorList>
    </citation>
    <scope>NUCLEOTIDE SEQUENCE [LARGE SCALE GENOMIC DNA]</scope>
    <source>
        <strain>AX4</strain>
    </source>
</reference>
<reference key="2">
    <citation type="journal article" date="2005" name="Nature">
        <title>The genome of the social amoeba Dictyostelium discoideum.</title>
        <authorList>
            <person name="Eichinger L."/>
            <person name="Pachebat J.A."/>
            <person name="Gloeckner G."/>
            <person name="Rajandream M.A."/>
            <person name="Sucgang R."/>
            <person name="Berriman M."/>
            <person name="Song J."/>
            <person name="Olsen R."/>
            <person name="Szafranski K."/>
            <person name="Xu Q."/>
            <person name="Tunggal B."/>
            <person name="Kummerfeld S."/>
            <person name="Madera M."/>
            <person name="Konfortov B.A."/>
            <person name="Rivero F."/>
            <person name="Bankier A.T."/>
            <person name="Lehmann R."/>
            <person name="Hamlin N."/>
            <person name="Davies R."/>
            <person name="Gaudet P."/>
            <person name="Fey P."/>
            <person name="Pilcher K."/>
            <person name="Chen G."/>
            <person name="Saunders D."/>
            <person name="Sodergren E.J."/>
            <person name="Davis P."/>
            <person name="Kerhornou A."/>
            <person name="Nie X."/>
            <person name="Hall N."/>
            <person name="Anjard C."/>
            <person name="Hemphill L."/>
            <person name="Bason N."/>
            <person name="Farbrother P."/>
            <person name="Desany B."/>
            <person name="Just E."/>
            <person name="Morio T."/>
            <person name="Rost R."/>
            <person name="Churcher C.M."/>
            <person name="Cooper J."/>
            <person name="Haydock S."/>
            <person name="van Driessche N."/>
            <person name="Cronin A."/>
            <person name="Goodhead I."/>
            <person name="Muzny D.M."/>
            <person name="Mourier T."/>
            <person name="Pain A."/>
            <person name="Lu M."/>
            <person name="Harper D."/>
            <person name="Lindsay R."/>
            <person name="Hauser H."/>
            <person name="James K.D."/>
            <person name="Quiles M."/>
            <person name="Madan Babu M."/>
            <person name="Saito T."/>
            <person name="Buchrieser C."/>
            <person name="Wardroper A."/>
            <person name="Felder M."/>
            <person name="Thangavelu M."/>
            <person name="Johnson D."/>
            <person name="Knights A."/>
            <person name="Loulseged H."/>
            <person name="Mungall K.L."/>
            <person name="Oliver K."/>
            <person name="Price C."/>
            <person name="Quail M.A."/>
            <person name="Urushihara H."/>
            <person name="Hernandez J."/>
            <person name="Rabbinowitsch E."/>
            <person name="Steffen D."/>
            <person name="Sanders M."/>
            <person name="Ma J."/>
            <person name="Kohara Y."/>
            <person name="Sharp S."/>
            <person name="Simmonds M.N."/>
            <person name="Spiegler S."/>
            <person name="Tivey A."/>
            <person name="Sugano S."/>
            <person name="White B."/>
            <person name="Walker D."/>
            <person name="Woodward J.R."/>
            <person name="Winckler T."/>
            <person name="Tanaka Y."/>
            <person name="Shaulsky G."/>
            <person name="Schleicher M."/>
            <person name="Weinstock G.M."/>
            <person name="Rosenthal A."/>
            <person name="Cox E.C."/>
            <person name="Chisholm R.L."/>
            <person name="Gibbs R.A."/>
            <person name="Loomis W.F."/>
            <person name="Platzer M."/>
            <person name="Kay R.R."/>
            <person name="Williams J.G."/>
            <person name="Dear P.H."/>
            <person name="Noegel A.A."/>
            <person name="Barrell B.G."/>
            <person name="Kuspa A."/>
        </authorList>
    </citation>
    <scope>NUCLEOTIDE SEQUENCE [LARGE SCALE GENOMIC DNA]</scope>
    <source>
        <strain>AX4</strain>
    </source>
</reference>
<organism>
    <name type="scientific">Dictyostelium discoideum</name>
    <name type="common">Social amoeba</name>
    <dbReference type="NCBI Taxonomy" id="44689"/>
    <lineage>
        <taxon>Eukaryota</taxon>
        <taxon>Amoebozoa</taxon>
        <taxon>Evosea</taxon>
        <taxon>Eumycetozoa</taxon>
        <taxon>Dictyostelia</taxon>
        <taxon>Dictyosteliales</taxon>
        <taxon>Dictyosteliaceae</taxon>
        <taxon>Dictyostelium</taxon>
    </lineage>
</organism>
<protein>
    <recommendedName>
        <fullName evidence="3">CYFIP-related Rac1 interactor homolog</fullName>
    </recommendedName>
</protein>
<proteinExistence type="inferred from homology"/>
<sequence length="315" mass="35574">MGQLLSFINGNDHTEQIFIDFEHAQPSDDERELHKTVNEVLIRGPAIIDKLLAYAGCNEFIRRAITNPGPETEDAAWEAVLPSVDQLQEFYDFSLELETCFPKLLVALCKNDPKASLSNQQALAKQLADIFDFVLKFDDAKMVNPAIQNDFSYYRRTLNRMKLTKKDANIKIRDELANRMSLFFAYPTPMMKVLSETTVKFLSQDTTVPRDNVTTALATMANVCHDMVEKKKFTQDDLNMFCLRAMVGSIILFDHIHPQGAFVKKSPVNIKPCIVTLKDSNTQSSPGLLNALRFTTIHLNDVDTPGAIKQLLLLD</sequence>
<dbReference type="EMBL" id="AAFI02000008">
    <property type="protein sequence ID" value="EAL71247.1"/>
    <property type="molecule type" value="Genomic_DNA"/>
</dbReference>
<dbReference type="RefSeq" id="XP_645179.1">
    <property type="nucleotide sequence ID" value="XM_640087.1"/>
</dbReference>
<dbReference type="SMR" id="Q8T2H0"/>
<dbReference type="FunCoup" id="Q8T2H0">
    <property type="interactions" value="3"/>
</dbReference>
<dbReference type="STRING" id="44689.Q8T2H0"/>
<dbReference type="PaxDb" id="44689-DDB0233320"/>
<dbReference type="EnsemblProtists" id="EAL71247">
    <property type="protein sequence ID" value="EAL71247"/>
    <property type="gene ID" value="DDB_G0272190"/>
</dbReference>
<dbReference type="GeneID" id="8618351"/>
<dbReference type="KEGG" id="ddi:DDB_G0272190"/>
<dbReference type="dictyBase" id="DDB_G0272190">
    <property type="gene designation" value="fam49"/>
</dbReference>
<dbReference type="VEuPathDB" id="AmoebaDB:DDB_G0272190"/>
<dbReference type="eggNOG" id="KOG3951">
    <property type="taxonomic scope" value="Eukaryota"/>
</dbReference>
<dbReference type="HOGENOM" id="CLU_056470_0_0_1"/>
<dbReference type="InParanoid" id="Q8T2H0"/>
<dbReference type="OMA" id="MANVCHD"/>
<dbReference type="PhylomeDB" id="Q8T2H0"/>
<dbReference type="Reactome" id="R-DDI-114608">
    <property type="pathway name" value="Platelet degranulation"/>
</dbReference>
<dbReference type="PRO" id="PR:Q8T2H0"/>
<dbReference type="Proteomes" id="UP000002195">
    <property type="component" value="Chromosome 2"/>
</dbReference>
<dbReference type="GO" id="GO:0016020">
    <property type="term" value="C:membrane"/>
    <property type="evidence" value="ECO:0007669"/>
    <property type="project" value="UniProtKB-SubCell"/>
</dbReference>
<dbReference type="GO" id="GO:0031267">
    <property type="term" value="F:small GTPase binding"/>
    <property type="evidence" value="ECO:0007669"/>
    <property type="project" value="InterPro"/>
</dbReference>
<dbReference type="GO" id="GO:0030833">
    <property type="term" value="P:regulation of actin filament polymerization"/>
    <property type="evidence" value="ECO:0007669"/>
    <property type="project" value="InterPro"/>
</dbReference>
<dbReference type="InterPro" id="IPR039789">
    <property type="entry name" value="CYRI"/>
</dbReference>
<dbReference type="InterPro" id="IPR009828">
    <property type="entry name" value="CYRIA/CYRIB_Rac1-bd"/>
</dbReference>
<dbReference type="PANTHER" id="PTHR12422">
    <property type="entry name" value="GH09096P"/>
    <property type="match status" value="1"/>
</dbReference>
<dbReference type="Pfam" id="PF07159">
    <property type="entry name" value="CYRIA-B_Rac1-bd"/>
    <property type="match status" value="1"/>
</dbReference>
<comment type="function">
    <text evidence="1">May negatively regulate RAC1 signaling and RAC1-driven cytoskeletal remodeling.</text>
</comment>
<comment type="subcellular location">
    <subcellularLocation>
        <location evidence="2">Membrane</location>
        <topology evidence="2">Lipid-anchor</topology>
    </subcellularLocation>
</comment>
<comment type="similarity">
    <text evidence="3">Belongs to the CYRI family.</text>
</comment>
<name>CYRI_DICDI</name>
<accession>Q8T2H0</accession>
<accession>Q55A05</accession>